<reference key="1">
    <citation type="journal article" date="2007" name="PLoS ONE">
        <title>Patterns of genome evolution among the microsporidian parasites Encephalitozoon cuniculi, Antonospora locustae and Enterocytozoon bieneusi.</title>
        <authorList>
            <person name="Corradi N."/>
            <person name="Akiyoshi D.E."/>
            <person name="Morrison H.G."/>
            <person name="Feng X."/>
            <person name="Weiss L.M."/>
            <person name="Tzipori S."/>
            <person name="Keeling P.J."/>
        </authorList>
    </citation>
    <scope>NUCLEOTIDE SEQUENCE [LARGE SCALE GENOMIC DNA]</scope>
    <source>
        <strain>H348</strain>
    </source>
</reference>
<reference key="2">
    <citation type="journal article" date="2009" name="PLoS Pathog.">
        <title>Genomic survey of the non-cultivatable opportunistic human pathogen, Enterocytozoon bieneusi.</title>
        <authorList>
            <person name="Akiyoshi D.E."/>
            <person name="Morrison H.G."/>
            <person name="Lei S."/>
            <person name="Feng X."/>
            <person name="Zhang Q."/>
            <person name="Corradi N."/>
            <person name="Mayanja H."/>
            <person name="Tumwine J.K."/>
            <person name="Keeling P.J."/>
            <person name="Weiss L.M."/>
            <person name="Tzipori S."/>
        </authorList>
    </citation>
    <scope>NUCLEOTIDE SEQUENCE [LARGE SCALE GENOMIC DNA]</scope>
    <source>
        <strain>H348</strain>
    </source>
</reference>
<comment type="function">
    <text evidence="1">Component of LSm protein complexes, which are involved in RNA processing and may function in a chaperone-like manner. LSM2 binds specifically to the 3'-terminal U-tract of U6 snRNA. Required for processing of pre-tRNAs, pre-rRNAs and U3 snoRNA (By similarity).</text>
</comment>
<comment type="subunit">
    <text evidence="1">LSm subunits form a heteromer with a doughnut shape.</text>
</comment>
<comment type="subcellular location">
    <subcellularLocation>
        <location evidence="1">Nucleus</location>
    </subcellularLocation>
</comment>
<comment type="similarity">
    <text evidence="3">Belongs to the snRNP Sm proteins family.</text>
</comment>
<name>LSM2_ENTBH</name>
<feature type="chain" id="PRO_0000388420" description="Probable U6 snRNA-associated Sm-like protein LSm2">
    <location>
        <begin position="1"/>
        <end position="97"/>
    </location>
</feature>
<feature type="domain" description="Sm" evidence="2">
    <location>
        <begin position="2"/>
        <end position="80"/>
    </location>
</feature>
<gene>
    <name type="primary">LSM2</name>
    <name type="ORF">EBI_26471</name>
</gene>
<sequence>MLFFEYFKSQLNNEIIVNLKNDISISGILKNVDPFLNIKIENVIAISTNEFIKINKSITNIQLCSIRGSAIKSVELKKNGLEEHMVEATRIKCNLDC</sequence>
<protein>
    <recommendedName>
        <fullName>Probable U6 snRNA-associated Sm-like protein LSm2</fullName>
    </recommendedName>
</protein>
<accession>A9CTE0</accession>
<keyword id="KW-0507">mRNA processing</keyword>
<keyword id="KW-0508">mRNA splicing</keyword>
<keyword id="KW-0539">Nucleus</keyword>
<keyword id="KW-0687">Ribonucleoprotein</keyword>
<keyword id="KW-0694">RNA-binding</keyword>
<keyword id="KW-0747">Spliceosome</keyword>
<proteinExistence type="inferred from homology"/>
<evidence type="ECO:0000250" key="1"/>
<evidence type="ECO:0000255" key="2">
    <source>
        <dbReference type="PROSITE-ProRule" id="PRU01346"/>
    </source>
</evidence>
<evidence type="ECO:0000305" key="3"/>
<organism>
    <name type="scientific">Enterocytozoon bieneusi (strain H348)</name>
    <name type="common">Microsporidian parasite</name>
    <dbReference type="NCBI Taxonomy" id="481877"/>
    <lineage>
        <taxon>Eukaryota</taxon>
        <taxon>Fungi</taxon>
        <taxon>Fungi incertae sedis</taxon>
        <taxon>Microsporidia</taxon>
        <taxon>Enterocytozoonidae</taxon>
        <taxon>Enterocytozoon</taxon>
    </lineage>
</organism>
<dbReference type="EMBL" id="ABGB01000004">
    <property type="protein sequence ID" value="EDQ31093.1"/>
    <property type="molecule type" value="Genomic_DNA"/>
</dbReference>
<dbReference type="RefSeq" id="XP_001827781.1">
    <property type="nucleotide sequence ID" value="XM_001827729.1"/>
</dbReference>
<dbReference type="SMR" id="A9CTE0"/>
<dbReference type="FunCoup" id="A9CTE0">
    <property type="interactions" value="327"/>
</dbReference>
<dbReference type="STRING" id="481877.A9CTE0"/>
<dbReference type="VEuPathDB" id="MicrosporidiaDB:EBI_26471"/>
<dbReference type="HOGENOM" id="CLU_130474_4_0_1"/>
<dbReference type="InParanoid" id="A9CTE0"/>
<dbReference type="OMA" id="DNISCTD"/>
<dbReference type="OrthoDB" id="10256176at2759"/>
<dbReference type="GO" id="GO:0071013">
    <property type="term" value="C:catalytic step 2 spliceosome"/>
    <property type="evidence" value="ECO:0007669"/>
    <property type="project" value="TreeGrafter"/>
</dbReference>
<dbReference type="GO" id="GO:1990726">
    <property type="term" value="C:Lsm1-7-Pat1 complex"/>
    <property type="evidence" value="ECO:0007669"/>
    <property type="project" value="TreeGrafter"/>
</dbReference>
<dbReference type="GO" id="GO:0000932">
    <property type="term" value="C:P-body"/>
    <property type="evidence" value="ECO:0007669"/>
    <property type="project" value="TreeGrafter"/>
</dbReference>
<dbReference type="GO" id="GO:0071011">
    <property type="term" value="C:precatalytic spliceosome"/>
    <property type="evidence" value="ECO:0007669"/>
    <property type="project" value="TreeGrafter"/>
</dbReference>
<dbReference type="GO" id="GO:0046540">
    <property type="term" value="C:U4/U6 x U5 tri-snRNP complex"/>
    <property type="evidence" value="ECO:0007669"/>
    <property type="project" value="TreeGrafter"/>
</dbReference>
<dbReference type="GO" id="GO:0005688">
    <property type="term" value="C:U6 snRNP"/>
    <property type="evidence" value="ECO:0007669"/>
    <property type="project" value="TreeGrafter"/>
</dbReference>
<dbReference type="GO" id="GO:0003723">
    <property type="term" value="F:RNA binding"/>
    <property type="evidence" value="ECO:0007669"/>
    <property type="project" value="UniProtKB-KW"/>
</dbReference>
<dbReference type="GO" id="GO:0000398">
    <property type="term" value="P:mRNA splicing, via spliceosome"/>
    <property type="evidence" value="ECO:0007669"/>
    <property type="project" value="TreeGrafter"/>
</dbReference>
<dbReference type="CDD" id="cd01725">
    <property type="entry name" value="LSm2"/>
    <property type="match status" value="1"/>
</dbReference>
<dbReference type="Gene3D" id="2.30.30.100">
    <property type="match status" value="1"/>
</dbReference>
<dbReference type="InterPro" id="IPR010920">
    <property type="entry name" value="LSM_dom_sf"/>
</dbReference>
<dbReference type="InterPro" id="IPR047575">
    <property type="entry name" value="Sm"/>
</dbReference>
<dbReference type="InterPro" id="IPR001163">
    <property type="entry name" value="Sm_dom_euk/arc"/>
</dbReference>
<dbReference type="InterPro" id="IPR016654">
    <property type="entry name" value="U6_snRNA_Lsm2"/>
</dbReference>
<dbReference type="PANTHER" id="PTHR13829">
    <property type="entry name" value="SNRNP CORE PROTEIN FAMILY MEMBER"/>
    <property type="match status" value="1"/>
</dbReference>
<dbReference type="PANTHER" id="PTHR13829:SF2">
    <property type="entry name" value="U6 SNRNA-ASSOCIATED SM-LIKE PROTEIN LSM2"/>
    <property type="match status" value="1"/>
</dbReference>
<dbReference type="Pfam" id="PF01423">
    <property type="entry name" value="LSM"/>
    <property type="match status" value="1"/>
</dbReference>
<dbReference type="SMART" id="SM00651">
    <property type="entry name" value="Sm"/>
    <property type="match status" value="1"/>
</dbReference>
<dbReference type="SUPFAM" id="SSF50182">
    <property type="entry name" value="Sm-like ribonucleoproteins"/>
    <property type="match status" value="1"/>
</dbReference>
<dbReference type="PROSITE" id="PS52002">
    <property type="entry name" value="SM"/>
    <property type="match status" value="1"/>
</dbReference>